<comment type="function">
    <text evidence="2 6 9 10 11">A component of desmosome cell-cell junctions which are required for positive regulation of cellular adhesion (By similarity). Involved in the interaction of plaque proteins and intermediate filaments mediating cell-cell adhesion. Required for proliferation and viability of embryonic stem cells in the blastocyst, thereby crucial for progression of post-implantation embryonic development (PubMed:12494996). Maintains pluripotency by regulating epithelial to mesenchymal transition/mesenchymal to epithelial transition (EMT/MET) via interacting with and sequestering CTNNB1 to sites of cell-cell contact, thereby reducing translocation of CTNNB1 to the nucleus and subsequent transcription of CTNNB1/TCF-target genes (PubMed:29910125). Promotes pluripotency and the multi-lineage differentiation potential of hematopoietic stem cells (By similarity). Plays a role in endothelial cell sprouting and elongation via mediating the junctional-association of cortical actin fibers and CDH5 (PubMed:27338829). Plays a role in limiting inflammatory infiltration and the apoptotic response to injury in kidney tubular epithelial cells, potentially via its role in maintaining cell-cell adhesion and the epithelial barrier (PubMed:38395410).</text>
</comment>
<comment type="subunit">
    <text evidence="2">Interacts with PKP2 (By similarity). Interacts with CTNNB1; the interaction promotes localization of CTNNB1 at cell junctions thus reducing its nuclear localization and subsequent transcription of CTNNB1/TCF-target genes (By similarity).</text>
</comment>
<comment type="subcellular location">
    <subcellularLocation>
        <location evidence="2">Cell membrane</location>
        <topology evidence="2">Single-pass type I membrane protein</topology>
    </subcellularLocation>
    <subcellularLocation>
        <location evidence="6 11">Cell junction</location>
        <location evidence="6 11">Desmosome</location>
    </subcellularLocation>
    <subcellularLocation>
        <location evidence="2">Cytoplasm</location>
    </subcellularLocation>
</comment>
<comment type="tissue specificity">
    <text evidence="7 10 11">Expressed in undifferentiated pluripotent stem cells, expression decreases during differentiation (at protein level) (PubMed:29910125). Expressed by embryonic stem cells, expression is reduced during differentiation (at protein level) (PubMed:29910125). Expressed at the apical-lateral cell membrane of kidney tubular epithelial cells (at protein level) (PubMed:38395410). Expressed in epidermis and heart (at protein level) (PubMed:12787123, PubMed:38395410). Expressed in the brain, spleen, lung, liver skeletal muscle, kidney and testis (PubMed:12787123).</text>
</comment>
<comment type="developmental stage">
    <text evidence="6 7 12">Expressed in embryonic stem cells at 3.5 dpc (at protein level) (PubMed:12494996). Expressed in the embryo at 7 to 17 dpc. Expressed uniformly in all 12.5 dpc epithelia, gradually becoming confined to the basal cell layers during.</text>
</comment>
<comment type="induction">
    <text evidence="11">Induced by ischemic injury or kidney disease in kidney tubular epithelial cells.</text>
</comment>
<comment type="domain">
    <text evidence="1">Three calcium ions are usually bound at the interface of each cadherin domain and rigidify the connections, imparting a strong curvature to the full-length ectodomain.</text>
</comment>
<comment type="PTM">
    <text evidence="2">Palmitoylated by ZDHHC5 at the plasma membrane.</text>
</comment>
<comment type="disruption phenotype">
    <text evidence="6 11">Homozygous knockout mice are embryonically lethal and heterozygous mice also show reduced viability due to failure of implantation and arrest of embryonic stem cell population expansion (PubMed:12494996). Loss of Dsp localization to cell borders in 3.5 dpc blastocysts and a decrease in Pkp2 expression in embryonic stem cells (PubMed:12494996). Conditional knockout in kidney tubular epithelial cells results in an increase in injury markers, apoptosis and inflammatory infiltrates in response to induced-injury, ultimately leading to an increase in atrophic distal kidney tubules (PubMed:38395410).</text>
</comment>
<protein>
    <recommendedName>
        <fullName>Desmoglein-2</fullName>
    </recommendedName>
</protein>
<sequence>MARSPGDRCALLLLVQLLAVVCLDFGNGLHLEVFSPRNEGKPFPKHTHLVRQKRAWITAPVALREGEDLSRKNPIAKIHSDLAEEKGIKITYKYTGKGITEPPFGIFVFDRNTGELNITSILDREETPYFLLTGYALDSRGNNLEKPLELRIKVLDINDNEPVFTQEVFVGSIEELSAAHTLVMKITATDADDPETLNAKVSYRIVSQEPANSHMFYLNKDTGEIYTTSFTLDREEHSSYSLTVEARDGNGQITDKPVQQAQVQIRILDVNDNIPVVENKMYEGTVEENQVNVEVMRIKVTDADEVGSDNWLANFTFASGNEGGYFHIETDTQTNEGIVTLVKEVDYEEMKKLDLSIIVTNKAAFHKSILSKYKATPIPITVKVKNVVEGIHFKSSVVSFRASEAMDRSSLSRSIGNFQVFDEDTGQAAKVTYVKVQDTDNWVSVDSVTSEIKLVKIPDFESRYVQNGTYTAKVVAISKEHPQKTITGTIVITVEDVNDNCPVLVDSVRSVCEDEPYVNVTAEDLDGAQNSAPFSFSIIDQPPGTAQKWKITHQESTSVLLQQSERKRGRSEIPFLISDSQGFSCPERQVLQLTVCECLKGGGCVAAQYDNYVGLGPAAIALMILALLLLLLVPLLLLICHCGGGAKGFTPIPGTIEMLHPWNNEGAPPEDKVVPSLLVADHAESSAVRGGVGGAMLKEGMMKGSSSASVTKGQHELSEVDGRWEEHRSLLTAGATHHVRTAGTIAANEAVRTRATGSSRDMSGARGAVAVNEEFLRSYFTEKAASYNGEDDLHMAKDCLLVYSQEDTASLRGSVGCCSFIEGELDDLFLDDLGLKFKTLAEVCLGRKIDLDVDIEQRQKPVREASVSAASGSHYEQAVTSSESAYSSNTGFPAPKPLHEVHTEKVTQEIVTESSVSSRQSQKVVPPPDPVASGNIIVTETSYAKGSAVPPSTVLLAPRQPQSLIVTERVYAPTSTLVDQHYANEEKVLVTERVIQPNGGIPKPLEVTQHLKDAQYVMVRERESILAPSSGVQPTLAMPSVAAGGQNVTVTERILTPASTLQSSYQIPSETSITARNTVLSSVGSIGPLPNLDLEESDRPNSTITTSSTRVTKHSTMQHSYS</sequence>
<reference key="1">
    <citation type="submission" date="2001-09" db="EMBL/GenBank/DDBJ databases">
        <title>Desmosomal cadherins mediate homophilic cell adhesion.</title>
        <authorList>
            <person name="Zhuxiang N."/>
            <person name="Garrod D.R."/>
        </authorList>
    </citation>
    <scope>NUCLEOTIDE SEQUENCE [MRNA]</scope>
    <source>
        <tissue>Pancreas</tissue>
    </source>
</reference>
<reference key="2">
    <citation type="journal article" date="2004" name="Genome Res.">
        <title>The status, quality, and expansion of the NIH full-length cDNA project: the Mammalian Gene Collection (MGC).</title>
        <authorList>
            <consortium name="The MGC Project Team"/>
        </authorList>
    </citation>
    <scope>NUCLEOTIDE SEQUENCE [LARGE SCALE MRNA]</scope>
    <source>
        <strain>C57BL/6J</strain>
        <tissue>Mammary gland</tissue>
    </source>
</reference>
<reference evidence="13" key="3">
    <citation type="journal article" date="1997" name="Differentiation">
        <title>Hierarchical expression of desmosomal cadherins during stratified epithelial morphogenesis in the mouse.</title>
        <authorList>
            <person name="King I.A."/>
            <person name="Angst B.D."/>
            <person name="Hunt D.M."/>
            <person name="Kruger M."/>
            <person name="Arnemann J."/>
            <person name="Buxton R.S."/>
        </authorList>
    </citation>
    <scope>NUCLEOTIDE SEQUENCE [MRNA] OF 1042-1122</scope>
    <scope>DEVELOPMENTAL STAGE</scope>
</reference>
<reference key="4">
    <citation type="journal article" date="2002" name="Eur. J. Cell Biol.">
        <title>Loss of desmoglein 2 suggests essential functions for early embryonic development and proliferation of embryonal stem cells.</title>
        <authorList>
            <person name="Eshkind L."/>
            <person name="Tian Q."/>
            <person name="Schmidt A."/>
            <person name="Franke W.W."/>
            <person name="Windoffer R."/>
            <person name="Leube R.E."/>
        </authorList>
    </citation>
    <scope>FUNCTION</scope>
    <scope>SUBCELLULAR LOCATION</scope>
    <scope>DEVELOPMENTAL STAGE</scope>
    <scope>DISRUPTION PHENOTYPE</scope>
</reference>
<reference key="5">
    <citation type="journal article" date="2003" name="J. Invest. Dermatol.">
        <title>Genomic sequence analysis of the mouse desmoglein cluster reveals evidence for six distinct genes: characterization of mouse DSG4, DSG5, and DSG6.</title>
        <authorList>
            <person name="Whittock N.V."/>
        </authorList>
    </citation>
    <scope>TISSUE SPECIFICITY</scope>
    <scope>DEVELOPMENTAL STAGE</scope>
</reference>
<reference key="6">
    <citation type="journal article" date="2009" name="Nat. Biotechnol.">
        <title>Mass-spectrometric identification and relative quantification of N-linked cell surface glycoproteins.</title>
        <authorList>
            <person name="Wollscheid B."/>
            <person name="Bausch-Fluck D."/>
            <person name="Henderson C."/>
            <person name="O'Brien R."/>
            <person name="Bibel M."/>
            <person name="Schiess R."/>
            <person name="Aebersold R."/>
            <person name="Watts J.D."/>
        </authorList>
    </citation>
    <scope>GLYCOSYLATION [LARGE SCALE ANALYSIS] AT ASN-467</scope>
</reference>
<reference key="7">
    <citation type="journal article" date="2010" name="Cell">
        <title>A tissue-specific atlas of mouse protein phosphorylation and expression.</title>
        <authorList>
            <person name="Huttlin E.L."/>
            <person name="Jedrychowski M.P."/>
            <person name="Elias J.E."/>
            <person name="Goswami T."/>
            <person name="Rad R."/>
            <person name="Beausoleil S.A."/>
            <person name="Villen J."/>
            <person name="Haas W."/>
            <person name="Sowa M.E."/>
            <person name="Gygi S.P."/>
        </authorList>
    </citation>
    <scope>PHOSPHORYLATION [LARGE SCALE ANALYSIS] AT SER-729</scope>
    <scope>IDENTIFICATION BY MASS SPECTROMETRY [LARGE SCALE ANALYSIS]</scope>
    <source>
        <tissue>Heart</tissue>
        <tissue>Liver</tissue>
        <tissue>Pancreas</tissue>
    </source>
</reference>
<reference key="8">
    <citation type="journal article" date="2016" name="Angiogenesis">
        <title>A non-canonical role for desmoglein-2 in endothelial cells: implications for neoangiogenesis.</title>
        <authorList>
            <person name="Ebert L.M."/>
            <person name="Tan L.Y."/>
            <person name="Johan M.Z."/>
            <person name="Min K.K."/>
            <person name="Cockshell M.P."/>
            <person name="Parham K.A."/>
            <person name="Betterman K.L."/>
            <person name="Szeto P."/>
            <person name="Boyle S."/>
            <person name="Silva L."/>
            <person name="Peng A."/>
            <person name="Zhang Y."/>
            <person name="Ruszkiewicz A."/>
            <person name="Zannettino A.C."/>
            <person name="Gronthos S."/>
            <person name="Koblar S."/>
            <person name="Harvey N.L."/>
            <person name="Lopez A.F."/>
            <person name="Shackleton M."/>
            <person name="Bonder C.S."/>
        </authorList>
    </citation>
    <scope>FUNCTION</scope>
</reference>
<reference key="9">
    <citation type="journal article" date="2018" name="Stem Cell Reports">
        <title>DSG2 Is a Functional Cell Surface Marker for Identification and Isolation of Human Pluripotent Stem Cells.</title>
        <authorList>
            <person name="Park J."/>
            <person name="Son Y."/>
            <person name="Lee N.G."/>
            <person name="Lee K."/>
            <person name="Lee D.G."/>
            <person name="Song J."/>
            <person name="Lee J."/>
            <person name="Kim S."/>
            <person name="Cho M.J."/>
            <person name="Jang J.H."/>
            <person name="Lee J."/>
            <person name="Park J.G."/>
            <person name="Kim Y.G."/>
            <person name="Kim J.S."/>
            <person name="Lee J."/>
            <person name="Cho Y.S."/>
            <person name="Park Y.J."/>
            <person name="Han B.S."/>
            <person name="Bae K.H."/>
            <person name="Han S."/>
            <person name="Kang B."/>
            <person name="Haam S."/>
            <person name="Lee S.H."/>
            <person name="Lee S.C."/>
            <person name="Min J.K."/>
        </authorList>
    </citation>
    <scope>FUNCTION</scope>
    <scope>TISSUE SPECIFICITY</scope>
</reference>
<reference key="10">
    <citation type="journal article" date="2024" name="Kidney Int.">
        <title>The role of desmoglein-2 in kidney disease.</title>
        <authorList>
            <person name="Xu T."/>
            <person name="Herkens L."/>
            <person name="Jia T."/>
            <person name="Klinkhammer B.M."/>
            <person name="Kant S."/>
            <person name="Krusche C.A."/>
            <person name="Buhl E.M."/>
            <person name="Hayat S."/>
            <person name="Floege J."/>
            <person name="Strnad P."/>
            <person name="Kramann R."/>
            <person name="Djudjaj S."/>
            <person name="Boor P."/>
        </authorList>
    </citation>
    <scope>FUNCTION</scope>
    <scope>SUBCELLULAR LOCATION</scope>
    <scope>TISSUE SPECIFICITY</scope>
    <scope>INDUCTION</scope>
    <scope>DISRUPTION PHENOTYPE</scope>
</reference>
<organism>
    <name type="scientific">Mus musculus</name>
    <name type="common">Mouse</name>
    <dbReference type="NCBI Taxonomy" id="10090"/>
    <lineage>
        <taxon>Eukaryota</taxon>
        <taxon>Metazoa</taxon>
        <taxon>Chordata</taxon>
        <taxon>Craniata</taxon>
        <taxon>Vertebrata</taxon>
        <taxon>Euteleostomi</taxon>
        <taxon>Mammalia</taxon>
        <taxon>Eutheria</taxon>
        <taxon>Euarchontoglires</taxon>
        <taxon>Glires</taxon>
        <taxon>Rodentia</taxon>
        <taxon>Myomorpha</taxon>
        <taxon>Muroidea</taxon>
        <taxon>Muridae</taxon>
        <taxon>Murinae</taxon>
        <taxon>Mus</taxon>
        <taxon>Mus</taxon>
    </lineage>
</organism>
<gene>
    <name type="primary">Dsg2</name>
</gene>
<evidence type="ECO:0000250" key="1"/>
<evidence type="ECO:0000250" key="2">
    <source>
        <dbReference type="UniProtKB" id="Q14126"/>
    </source>
</evidence>
<evidence type="ECO:0000255" key="3"/>
<evidence type="ECO:0000255" key="4">
    <source>
        <dbReference type="PROSITE-ProRule" id="PRU00043"/>
    </source>
</evidence>
<evidence type="ECO:0000256" key="5">
    <source>
        <dbReference type="SAM" id="MobiDB-lite"/>
    </source>
</evidence>
<evidence type="ECO:0000269" key="6">
    <source>
    </source>
</evidence>
<evidence type="ECO:0000269" key="7">
    <source>
    </source>
</evidence>
<evidence type="ECO:0000269" key="8">
    <source>
    </source>
</evidence>
<evidence type="ECO:0000269" key="9">
    <source>
    </source>
</evidence>
<evidence type="ECO:0000269" key="10">
    <source>
    </source>
</evidence>
<evidence type="ECO:0000269" key="11">
    <source>
    </source>
</evidence>
<evidence type="ECO:0000269" key="12">
    <source>
    </source>
</evidence>
<evidence type="ECO:0000305" key="13"/>
<evidence type="ECO:0007744" key="14">
    <source>
    </source>
</evidence>
<proteinExistence type="evidence at protein level"/>
<name>DSG2_MOUSE</name>
<keyword id="KW-0106">Calcium</keyword>
<keyword id="KW-0130">Cell adhesion</keyword>
<keyword id="KW-0965">Cell junction</keyword>
<keyword id="KW-1003">Cell membrane</keyword>
<keyword id="KW-0165">Cleavage on pair of basic residues</keyword>
<keyword id="KW-0963">Cytoplasm</keyword>
<keyword id="KW-0325">Glycoprotein</keyword>
<keyword id="KW-0449">Lipoprotein</keyword>
<keyword id="KW-0472">Membrane</keyword>
<keyword id="KW-0479">Metal-binding</keyword>
<keyword id="KW-0564">Palmitate</keyword>
<keyword id="KW-0597">Phosphoprotein</keyword>
<keyword id="KW-1185">Reference proteome</keyword>
<keyword id="KW-0677">Repeat</keyword>
<keyword id="KW-0732">Signal</keyword>
<keyword id="KW-0812">Transmembrane</keyword>
<keyword id="KW-1133">Transmembrane helix</keyword>
<dbReference type="EMBL" id="AB072269">
    <property type="protein sequence ID" value="BAB86843.1"/>
    <property type="molecule type" value="mRNA"/>
</dbReference>
<dbReference type="EMBL" id="BC034056">
    <property type="protein sequence ID" value="AAH34056.1"/>
    <property type="molecule type" value="mRNA"/>
</dbReference>
<dbReference type="EMBL" id="BC131653">
    <property type="protein sequence ID" value="AAI31654.1"/>
    <property type="molecule type" value="mRNA"/>
</dbReference>
<dbReference type="EMBL" id="BC131654">
    <property type="protein sequence ID" value="AAI31655.1"/>
    <property type="molecule type" value="mRNA"/>
</dbReference>
<dbReference type="EMBL" id="AJ000328">
    <property type="protein sequence ID" value="CAA03995.1"/>
    <property type="molecule type" value="mRNA"/>
</dbReference>
<dbReference type="CCDS" id="CCDS29084.1"/>
<dbReference type="RefSeq" id="NP_031909.2">
    <property type="nucleotide sequence ID" value="NM_007883.4"/>
</dbReference>
<dbReference type="SMR" id="O55111"/>
<dbReference type="BioGRID" id="199324">
    <property type="interactions" value="1"/>
</dbReference>
<dbReference type="FunCoup" id="O55111">
    <property type="interactions" value="271"/>
</dbReference>
<dbReference type="STRING" id="10090.ENSMUSP00000057096"/>
<dbReference type="GlyCosmos" id="O55111">
    <property type="glycosylation" value="4 sites, No reported glycans"/>
</dbReference>
<dbReference type="GlyGen" id="O55111">
    <property type="glycosylation" value="7 sites, 2 N-linked glycans (2 sites), 1 O-linked glycan (2 sites)"/>
</dbReference>
<dbReference type="iPTMnet" id="O55111"/>
<dbReference type="PhosphoSitePlus" id="O55111"/>
<dbReference type="SwissPalm" id="O55111"/>
<dbReference type="CPTAC" id="non-CPTAC-3572"/>
<dbReference type="jPOST" id="O55111"/>
<dbReference type="PaxDb" id="10090-ENSMUSP00000057096"/>
<dbReference type="PeptideAtlas" id="O55111"/>
<dbReference type="ProteomicsDB" id="279811"/>
<dbReference type="Antibodypedia" id="1349">
    <property type="antibodies" value="751 antibodies from 41 providers"/>
</dbReference>
<dbReference type="DNASU" id="13511"/>
<dbReference type="Ensembl" id="ENSMUST00000059787.15">
    <property type="protein sequence ID" value="ENSMUSP00000057096.9"/>
    <property type="gene ID" value="ENSMUSG00000044393.16"/>
</dbReference>
<dbReference type="GeneID" id="13511"/>
<dbReference type="KEGG" id="mmu:13511"/>
<dbReference type="UCSC" id="uc008ees.2">
    <property type="organism name" value="mouse"/>
</dbReference>
<dbReference type="AGR" id="MGI:1196466"/>
<dbReference type="CTD" id="1829"/>
<dbReference type="MGI" id="MGI:1196466">
    <property type="gene designation" value="Dsg2"/>
</dbReference>
<dbReference type="VEuPathDB" id="HostDB:ENSMUSG00000044393"/>
<dbReference type="eggNOG" id="KOG3594">
    <property type="taxonomic scope" value="Eukaryota"/>
</dbReference>
<dbReference type="GeneTree" id="ENSGT01030000234624"/>
<dbReference type="HOGENOM" id="CLU_005284_0_1_1"/>
<dbReference type="InParanoid" id="O55111"/>
<dbReference type="OMA" id="MGAGTMT"/>
<dbReference type="OrthoDB" id="8961010at2759"/>
<dbReference type="PhylomeDB" id="O55111"/>
<dbReference type="TreeFam" id="TF331809"/>
<dbReference type="Reactome" id="R-MMU-351906">
    <property type="pathway name" value="Apoptotic cleavage of cell adhesion proteins"/>
</dbReference>
<dbReference type="Reactome" id="R-MMU-6805567">
    <property type="pathway name" value="Keratinization"/>
</dbReference>
<dbReference type="Reactome" id="R-MMU-6809371">
    <property type="pathway name" value="Formation of the cornified envelope"/>
</dbReference>
<dbReference type="Reactome" id="R-MMU-9013404">
    <property type="pathway name" value="RAC2 GTPase cycle"/>
</dbReference>
<dbReference type="Reactome" id="R-MMU-9013408">
    <property type="pathway name" value="RHOG GTPase cycle"/>
</dbReference>
<dbReference type="Reactome" id="R-MMU-9013423">
    <property type="pathway name" value="RAC3 GTPase cycle"/>
</dbReference>
<dbReference type="BioGRID-ORCS" id="13511">
    <property type="hits" value="3 hits in 78 CRISPR screens"/>
</dbReference>
<dbReference type="ChiTaRS" id="Dsg2">
    <property type="organism name" value="mouse"/>
</dbReference>
<dbReference type="PRO" id="PR:O55111"/>
<dbReference type="Proteomes" id="UP000000589">
    <property type="component" value="Chromosome 18"/>
</dbReference>
<dbReference type="RNAct" id="O55111">
    <property type="molecule type" value="protein"/>
</dbReference>
<dbReference type="Bgee" id="ENSMUSG00000044393">
    <property type="expression patterns" value="Expressed in left colon and 244 other cell types or tissues"/>
</dbReference>
<dbReference type="ExpressionAtlas" id="O55111">
    <property type="expression patterns" value="baseline and differential"/>
</dbReference>
<dbReference type="GO" id="GO:0016324">
    <property type="term" value="C:apical plasma membrane"/>
    <property type="evidence" value="ECO:0007669"/>
    <property type="project" value="Ensembl"/>
</dbReference>
<dbReference type="GO" id="GO:0009986">
    <property type="term" value="C:cell surface"/>
    <property type="evidence" value="ECO:0007669"/>
    <property type="project" value="Ensembl"/>
</dbReference>
<dbReference type="GO" id="GO:0005737">
    <property type="term" value="C:cytoplasm"/>
    <property type="evidence" value="ECO:0007669"/>
    <property type="project" value="UniProtKB-SubCell"/>
</dbReference>
<dbReference type="GO" id="GO:0030057">
    <property type="term" value="C:desmosome"/>
    <property type="evidence" value="ECO:0000314"/>
    <property type="project" value="UniProtKB"/>
</dbReference>
<dbReference type="GO" id="GO:0014704">
    <property type="term" value="C:intercalated disc"/>
    <property type="evidence" value="ECO:0007669"/>
    <property type="project" value="Ensembl"/>
</dbReference>
<dbReference type="GO" id="GO:0043231">
    <property type="term" value="C:intracellular membrane-bounded organelle"/>
    <property type="evidence" value="ECO:0007669"/>
    <property type="project" value="Ensembl"/>
</dbReference>
<dbReference type="GO" id="GO:0016328">
    <property type="term" value="C:lateral plasma membrane"/>
    <property type="evidence" value="ECO:0007669"/>
    <property type="project" value="Ensembl"/>
</dbReference>
<dbReference type="GO" id="GO:0005509">
    <property type="term" value="F:calcium ion binding"/>
    <property type="evidence" value="ECO:0007669"/>
    <property type="project" value="InterPro"/>
</dbReference>
<dbReference type="GO" id="GO:0050839">
    <property type="term" value="F:cell adhesion molecule binding"/>
    <property type="evidence" value="ECO:0007669"/>
    <property type="project" value="Ensembl"/>
</dbReference>
<dbReference type="GO" id="GO:0086073">
    <property type="term" value="P:bundle of His cell-Purkinje myocyte adhesion involved in cell communication"/>
    <property type="evidence" value="ECO:0007669"/>
    <property type="project" value="Ensembl"/>
</dbReference>
<dbReference type="GO" id="GO:0002934">
    <property type="term" value="P:desmosome organization"/>
    <property type="evidence" value="ECO:0007669"/>
    <property type="project" value="Ensembl"/>
</dbReference>
<dbReference type="GO" id="GO:0007156">
    <property type="term" value="P:homophilic cell adhesion via plasma membrane adhesion molecules"/>
    <property type="evidence" value="ECO:0007669"/>
    <property type="project" value="Ensembl"/>
</dbReference>
<dbReference type="GO" id="GO:0060135">
    <property type="term" value="P:maternal process involved in female pregnancy"/>
    <property type="evidence" value="ECO:0007669"/>
    <property type="project" value="Ensembl"/>
</dbReference>
<dbReference type="GO" id="GO:0060231">
    <property type="term" value="P:mesenchymal to epithelial transition"/>
    <property type="evidence" value="ECO:0000250"/>
    <property type="project" value="UniProtKB"/>
</dbReference>
<dbReference type="GO" id="GO:0043066">
    <property type="term" value="P:negative regulation of apoptotic process"/>
    <property type="evidence" value="ECO:0000315"/>
    <property type="project" value="UniProtKB"/>
</dbReference>
<dbReference type="GO" id="GO:0045602">
    <property type="term" value="P:negative regulation of endothelial cell differentiation"/>
    <property type="evidence" value="ECO:0007669"/>
    <property type="project" value="Ensembl"/>
</dbReference>
<dbReference type="GO" id="GO:0010719">
    <property type="term" value="P:negative regulation of epithelial to mesenchymal transition"/>
    <property type="evidence" value="ECO:0000250"/>
    <property type="project" value="UniProtKB"/>
</dbReference>
<dbReference type="GO" id="GO:0106015">
    <property type="term" value="P:negative regulation of inflammatory response to wounding"/>
    <property type="evidence" value="ECO:0000315"/>
    <property type="project" value="UniProtKB"/>
</dbReference>
<dbReference type="GO" id="GO:0045785">
    <property type="term" value="P:positive regulation of cell adhesion"/>
    <property type="evidence" value="ECO:0007669"/>
    <property type="project" value="Ensembl"/>
</dbReference>
<dbReference type="GO" id="GO:0150107">
    <property type="term" value="P:positive regulation of protein localization to cell-cell junction"/>
    <property type="evidence" value="ECO:0000315"/>
    <property type="project" value="UniProtKB"/>
</dbReference>
<dbReference type="GO" id="GO:1903672">
    <property type="term" value="P:positive regulation of sprouting angiogenesis"/>
    <property type="evidence" value="ECO:0000315"/>
    <property type="project" value="UniProtKB"/>
</dbReference>
<dbReference type="GO" id="GO:1902459">
    <property type="term" value="P:positive regulation of stem cell population maintenance"/>
    <property type="evidence" value="ECO:0000315"/>
    <property type="project" value="UniProtKB"/>
</dbReference>
<dbReference type="GO" id="GO:0003165">
    <property type="term" value="P:Purkinje myocyte development"/>
    <property type="evidence" value="ECO:0007669"/>
    <property type="project" value="Ensembl"/>
</dbReference>
<dbReference type="GO" id="GO:0086091">
    <property type="term" value="P:regulation of heart rate by cardiac conduction"/>
    <property type="evidence" value="ECO:0007669"/>
    <property type="project" value="Ensembl"/>
</dbReference>
<dbReference type="GO" id="GO:0098911">
    <property type="term" value="P:regulation of ventricular cardiac muscle cell action potential"/>
    <property type="evidence" value="ECO:0007669"/>
    <property type="project" value="Ensembl"/>
</dbReference>
<dbReference type="GO" id="GO:0032570">
    <property type="term" value="P:response to progesterone"/>
    <property type="evidence" value="ECO:0007669"/>
    <property type="project" value="Ensembl"/>
</dbReference>
<dbReference type="GO" id="GO:0072089">
    <property type="term" value="P:stem cell proliferation"/>
    <property type="evidence" value="ECO:0000315"/>
    <property type="project" value="UniProtKB"/>
</dbReference>
<dbReference type="CDD" id="cd11304">
    <property type="entry name" value="Cadherin_repeat"/>
    <property type="match status" value="4"/>
</dbReference>
<dbReference type="FunFam" id="2.60.40.60:FF:000011">
    <property type="entry name" value="Cadherin 1"/>
    <property type="match status" value="1"/>
</dbReference>
<dbReference type="FunFam" id="2.60.40.60:FF:000031">
    <property type="entry name" value="Cadherin 3"/>
    <property type="match status" value="1"/>
</dbReference>
<dbReference type="FunFam" id="2.60.40.60:FF:000068">
    <property type="entry name" value="Desmoglein 1"/>
    <property type="match status" value="1"/>
</dbReference>
<dbReference type="FunFam" id="2.60.40.60:FF:000083">
    <property type="entry name" value="Desmoglein 1"/>
    <property type="match status" value="1"/>
</dbReference>
<dbReference type="FunFam" id="4.10.900.10:FF:000003">
    <property type="entry name" value="Desmoglein 1"/>
    <property type="match status" value="1"/>
</dbReference>
<dbReference type="FunFam" id="2.60.40.60:FF:000074">
    <property type="entry name" value="Desmoglein 4"/>
    <property type="match status" value="1"/>
</dbReference>
<dbReference type="Gene3D" id="2.60.40.60">
    <property type="entry name" value="Cadherins"/>
    <property type="match status" value="5"/>
</dbReference>
<dbReference type="Gene3D" id="4.10.900.10">
    <property type="entry name" value="TCF3-CBD (Catenin binding domain)"/>
    <property type="match status" value="1"/>
</dbReference>
<dbReference type="InterPro" id="IPR050971">
    <property type="entry name" value="Cadherin-domain_protein"/>
</dbReference>
<dbReference type="InterPro" id="IPR002126">
    <property type="entry name" value="Cadherin-like_dom"/>
</dbReference>
<dbReference type="InterPro" id="IPR015919">
    <property type="entry name" value="Cadherin-like_sf"/>
</dbReference>
<dbReference type="InterPro" id="IPR020894">
    <property type="entry name" value="Cadherin_CS"/>
</dbReference>
<dbReference type="InterPro" id="IPR027397">
    <property type="entry name" value="Catenin-bd_sf"/>
</dbReference>
<dbReference type="InterPro" id="IPR009122">
    <property type="entry name" value="Desmosomal_cadherin"/>
</dbReference>
<dbReference type="PANTHER" id="PTHR24025">
    <property type="entry name" value="DESMOGLEIN FAMILY MEMBER"/>
    <property type="match status" value="1"/>
</dbReference>
<dbReference type="PANTHER" id="PTHR24025:SF1">
    <property type="entry name" value="DESMOGLEIN-2"/>
    <property type="match status" value="1"/>
</dbReference>
<dbReference type="Pfam" id="PF00028">
    <property type="entry name" value="Cadherin"/>
    <property type="match status" value="3"/>
</dbReference>
<dbReference type="PRINTS" id="PR00205">
    <property type="entry name" value="CADHERIN"/>
</dbReference>
<dbReference type="PRINTS" id="PR01818">
    <property type="entry name" value="DESMOCADHERN"/>
</dbReference>
<dbReference type="PRINTS" id="PR01819">
    <property type="entry name" value="DESMOGLEIN"/>
</dbReference>
<dbReference type="SMART" id="SM00112">
    <property type="entry name" value="CA"/>
    <property type="match status" value="4"/>
</dbReference>
<dbReference type="SUPFAM" id="SSF49313">
    <property type="entry name" value="Cadherin-like"/>
    <property type="match status" value="5"/>
</dbReference>
<dbReference type="PROSITE" id="PS00232">
    <property type="entry name" value="CADHERIN_1"/>
    <property type="match status" value="3"/>
</dbReference>
<dbReference type="PROSITE" id="PS50268">
    <property type="entry name" value="CADHERIN_2"/>
    <property type="match status" value="4"/>
</dbReference>
<accession>O55111</accession>
<accession>A2RRJ0</accession>
<accession>Q8K069</accession>
<accession>Q8R517</accession>
<feature type="signal peptide" evidence="3">
    <location>
        <begin position="1"/>
        <end position="28"/>
    </location>
</feature>
<feature type="propeptide" id="PRO_0000003847" evidence="3">
    <location>
        <begin position="29"/>
        <end position="54"/>
    </location>
</feature>
<feature type="chain" id="PRO_0000003848" description="Desmoglein-2">
    <location>
        <begin position="55"/>
        <end position="1122"/>
    </location>
</feature>
<feature type="topological domain" description="Extracellular" evidence="3">
    <location>
        <begin position="55"/>
        <end position="618"/>
    </location>
</feature>
<feature type="transmembrane region" description="Helical" evidence="3">
    <location>
        <begin position="619"/>
        <end position="639"/>
    </location>
</feature>
<feature type="topological domain" description="Cytoplasmic" evidence="3">
    <location>
        <begin position="640"/>
        <end position="1122"/>
    </location>
</feature>
<feature type="domain" description="Cadherin 1" evidence="4">
    <location>
        <begin position="55"/>
        <end position="164"/>
    </location>
</feature>
<feature type="domain" description="Cadherin 2" evidence="4">
    <location>
        <begin position="165"/>
        <end position="277"/>
    </location>
</feature>
<feature type="domain" description="Cadherin 3" evidence="4">
    <location>
        <begin position="278"/>
        <end position="398"/>
    </location>
</feature>
<feature type="domain" description="Cadherin 4" evidence="4">
    <location>
        <begin position="397"/>
        <end position="504"/>
    </location>
</feature>
<feature type="repeat" description="Desmoglein repeat 1">
    <location>
        <begin position="885"/>
        <end position="916"/>
    </location>
</feature>
<feature type="repeat" description="Desmoglein repeat 2">
    <location>
        <begin position="917"/>
        <end position="945"/>
    </location>
</feature>
<feature type="repeat" description="Desmoglein repeat 3">
    <location>
        <begin position="946"/>
        <end position="971"/>
    </location>
</feature>
<feature type="repeat" description="Desmoglein repeat 4">
    <location>
        <begin position="972"/>
        <end position="995"/>
    </location>
</feature>
<feature type="repeat" description="Desmoglein repeat 5">
    <location>
        <begin position="996"/>
        <end position="1024"/>
    </location>
</feature>
<feature type="repeat" description="Desmoglein repeat 6">
    <location>
        <begin position="1025"/>
        <end position="1055"/>
    </location>
</feature>
<feature type="region of interest" description="Disordered" evidence="5">
    <location>
        <begin position="913"/>
        <end position="932"/>
    </location>
</feature>
<feature type="region of interest" description="Disordered" evidence="5">
    <location>
        <begin position="1089"/>
        <end position="1122"/>
    </location>
</feature>
<feature type="compositionally biased region" description="Low complexity" evidence="5">
    <location>
        <begin position="914"/>
        <end position="924"/>
    </location>
</feature>
<feature type="compositionally biased region" description="Polar residues" evidence="5">
    <location>
        <begin position="1100"/>
        <end position="1122"/>
    </location>
</feature>
<feature type="modified residue" description="Phosphoserine" evidence="2">
    <location>
        <position position="685"/>
    </location>
</feature>
<feature type="modified residue" description="Phosphoserine" evidence="2">
    <location>
        <position position="706"/>
    </location>
</feature>
<feature type="modified residue" description="Phosphoserine" evidence="2">
    <location>
        <position position="709"/>
    </location>
</feature>
<feature type="modified residue" description="Phosphoserine" evidence="14">
    <location>
        <position position="729"/>
    </location>
</feature>
<feature type="modified residue" description="Phosphothreonine" evidence="2">
    <location>
        <position position="808"/>
    </location>
</feature>
<feature type="modified residue" description="Phosphoserine" evidence="2">
    <location>
        <position position="810"/>
    </location>
</feature>
<feature type="modified residue" description="Phosphoserine" evidence="2">
    <location>
        <position position="814"/>
    </location>
</feature>
<feature type="modified residue" description="Phosphoserine" evidence="2">
    <location>
        <position position="819"/>
    </location>
</feature>
<feature type="modified residue" description="Phosphoserine" evidence="2">
    <location>
        <position position="1122"/>
    </location>
</feature>
<feature type="glycosylation site" description="N-linked (GlcNAc...) asparagine" evidence="3">
    <location>
        <position position="117"/>
    </location>
</feature>
<feature type="glycosylation site" description="N-linked (GlcNAc...) asparagine" evidence="3">
    <location>
        <position position="314"/>
    </location>
</feature>
<feature type="glycosylation site" description="N-linked (GlcNAc...) asparagine" evidence="8">
    <location>
        <position position="467"/>
    </location>
</feature>
<feature type="glycosylation site" description="N-linked (GlcNAc...) asparagine" evidence="3">
    <location>
        <position position="519"/>
    </location>
</feature>
<feature type="sequence conflict" description="In Ref. 1; BAB86843." evidence="13" ref="1">
    <original>D</original>
    <variation>Y</variation>
    <location>
        <position position="304"/>
    </location>
</feature>
<feature type="sequence conflict" description="In Ref. 2; AAH34056." evidence="13" ref="2">
    <original>I</original>
    <variation>L</variation>
    <location>
        <position position="358"/>
    </location>
</feature>
<feature type="sequence conflict" description="In Ref. 2; AAH34056." evidence="13" ref="2">
    <original>E</original>
    <variation>D</variation>
    <location>
        <position position="480"/>
    </location>
</feature>
<feature type="sequence conflict" description="In Ref. 2; AAH34056." evidence="13" ref="2">
    <original>V</original>
    <variation>I</variation>
    <location>
        <position position="491"/>
    </location>
</feature>
<feature type="sequence conflict" description="In Ref. 1; BAB86843." evidence="13" ref="1">
    <original>R</original>
    <variation>T</variation>
    <location>
        <position position="863"/>
    </location>
</feature>
<feature type="sequence conflict" description="In Ref. 1; BAB86843." evidence="13" ref="1">
    <original>H</original>
    <variation>R</variation>
    <location>
        <position position="899"/>
    </location>
</feature>